<name>MURB_PSEU2</name>
<gene>
    <name evidence="1" type="primary">murB</name>
    <name type="ordered locus">Psyr_1637</name>
</gene>
<organism>
    <name type="scientific">Pseudomonas syringae pv. syringae (strain B728a)</name>
    <dbReference type="NCBI Taxonomy" id="205918"/>
    <lineage>
        <taxon>Bacteria</taxon>
        <taxon>Pseudomonadati</taxon>
        <taxon>Pseudomonadota</taxon>
        <taxon>Gammaproteobacteria</taxon>
        <taxon>Pseudomonadales</taxon>
        <taxon>Pseudomonadaceae</taxon>
        <taxon>Pseudomonas</taxon>
        <taxon>Pseudomonas syringae</taxon>
    </lineage>
</organism>
<comment type="function">
    <text evidence="1">Cell wall formation.</text>
</comment>
<comment type="catalytic activity">
    <reaction evidence="1">
        <text>UDP-N-acetyl-alpha-D-muramate + NADP(+) = UDP-N-acetyl-3-O-(1-carboxyvinyl)-alpha-D-glucosamine + NADPH + H(+)</text>
        <dbReference type="Rhea" id="RHEA:12248"/>
        <dbReference type="ChEBI" id="CHEBI:15378"/>
        <dbReference type="ChEBI" id="CHEBI:57783"/>
        <dbReference type="ChEBI" id="CHEBI:58349"/>
        <dbReference type="ChEBI" id="CHEBI:68483"/>
        <dbReference type="ChEBI" id="CHEBI:70757"/>
        <dbReference type="EC" id="1.3.1.98"/>
    </reaction>
</comment>
<comment type="cofactor">
    <cofactor evidence="1">
        <name>FAD</name>
        <dbReference type="ChEBI" id="CHEBI:57692"/>
    </cofactor>
</comment>
<comment type="pathway">
    <text evidence="1">Cell wall biogenesis; peptidoglycan biosynthesis.</text>
</comment>
<comment type="subcellular location">
    <subcellularLocation>
        <location evidence="1">Cytoplasm</location>
    </subcellularLocation>
</comment>
<comment type="similarity">
    <text evidence="1">Belongs to the MurB family.</text>
</comment>
<evidence type="ECO:0000255" key="1">
    <source>
        <dbReference type="HAMAP-Rule" id="MF_00037"/>
    </source>
</evidence>
<keyword id="KW-0131">Cell cycle</keyword>
<keyword id="KW-0132">Cell division</keyword>
<keyword id="KW-0133">Cell shape</keyword>
<keyword id="KW-0961">Cell wall biogenesis/degradation</keyword>
<keyword id="KW-0963">Cytoplasm</keyword>
<keyword id="KW-0274">FAD</keyword>
<keyword id="KW-0285">Flavoprotein</keyword>
<keyword id="KW-0521">NADP</keyword>
<keyword id="KW-0560">Oxidoreductase</keyword>
<keyword id="KW-0573">Peptidoglycan synthesis</keyword>
<feature type="chain" id="PRO_0000224710" description="UDP-N-acetylenolpyruvoylglucosamine reductase">
    <location>
        <begin position="1"/>
        <end position="339"/>
    </location>
</feature>
<feature type="domain" description="FAD-binding PCMH-type" evidence="1">
    <location>
        <begin position="19"/>
        <end position="189"/>
    </location>
</feature>
<feature type="active site" evidence="1">
    <location>
        <position position="166"/>
    </location>
</feature>
<feature type="active site" description="Proton donor" evidence="1">
    <location>
        <position position="239"/>
    </location>
</feature>
<feature type="active site" evidence="1">
    <location>
        <position position="335"/>
    </location>
</feature>
<proteinExistence type="inferred from homology"/>
<sequence>MSLQVQSAISLKPFNTFGVDVQARLFAEAHSDDDVREALAYSARHDVPLLVIGGGSNLLLSADVQSLVVRMASRGIRIVHEDCLESIVEAEAGEPWHPFVQSCLELGLAGLENLSLIPGTVGAAPMQNIGAYGVEIKDVFHSLTALDRETGELREFSLQDCAFGYRDSVFKHQVARWLILRVRFKLSRVARLHLEYGPVRQRLDEQGIDRPTPFDVSRAICAIRSEKLPDPAVLGNAGSFFKNPIIAAELYATIKQQHPGVVGYPQDDGQVKLAAGWLIEQAGWKGYRDGDAGVHKLQSLVLVNYGQASGLQLLSLARRIQTDIAERFGVELEMEPNLY</sequence>
<dbReference type="EC" id="1.3.1.98" evidence="1"/>
<dbReference type="EMBL" id="CP000075">
    <property type="protein sequence ID" value="AAY36685.1"/>
    <property type="molecule type" value="Genomic_DNA"/>
</dbReference>
<dbReference type="RefSeq" id="WP_011267145.1">
    <property type="nucleotide sequence ID" value="NC_007005.1"/>
</dbReference>
<dbReference type="RefSeq" id="YP_234723.1">
    <property type="nucleotide sequence ID" value="NC_007005.1"/>
</dbReference>
<dbReference type="SMR" id="Q4ZVY7"/>
<dbReference type="STRING" id="205918.Psyr_1637"/>
<dbReference type="KEGG" id="psb:Psyr_1637"/>
<dbReference type="PATRIC" id="fig|205918.7.peg.1674"/>
<dbReference type="eggNOG" id="COG0812">
    <property type="taxonomic scope" value="Bacteria"/>
</dbReference>
<dbReference type="HOGENOM" id="CLU_035304_0_0_6"/>
<dbReference type="OrthoDB" id="9804753at2"/>
<dbReference type="UniPathway" id="UPA00219"/>
<dbReference type="Proteomes" id="UP000000426">
    <property type="component" value="Chromosome"/>
</dbReference>
<dbReference type="GO" id="GO:0005829">
    <property type="term" value="C:cytosol"/>
    <property type="evidence" value="ECO:0007669"/>
    <property type="project" value="TreeGrafter"/>
</dbReference>
<dbReference type="GO" id="GO:0071949">
    <property type="term" value="F:FAD binding"/>
    <property type="evidence" value="ECO:0007669"/>
    <property type="project" value="InterPro"/>
</dbReference>
<dbReference type="GO" id="GO:0008762">
    <property type="term" value="F:UDP-N-acetylmuramate dehydrogenase activity"/>
    <property type="evidence" value="ECO:0007669"/>
    <property type="project" value="UniProtKB-UniRule"/>
</dbReference>
<dbReference type="GO" id="GO:0051301">
    <property type="term" value="P:cell division"/>
    <property type="evidence" value="ECO:0007669"/>
    <property type="project" value="UniProtKB-KW"/>
</dbReference>
<dbReference type="GO" id="GO:0071555">
    <property type="term" value="P:cell wall organization"/>
    <property type="evidence" value="ECO:0007669"/>
    <property type="project" value="UniProtKB-KW"/>
</dbReference>
<dbReference type="GO" id="GO:0009252">
    <property type="term" value="P:peptidoglycan biosynthetic process"/>
    <property type="evidence" value="ECO:0007669"/>
    <property type="project" value="UniProtKB-UniRule"/>
</dbReference>
<dbReference type="GO" id="GO:0008360">
    <property type="term" value="P:regulation of cell shape"/>
    <property type="evidence" value="ECO:0007669"/>
    <property type="project" value="UniProtKB-KW"/>
</dbReference>
<dbReference type="Gene3D" id="3.30.465.10">
    <property type="match status" value="1"/>
</dbReference>
<dbReference type="Gene3D" id="3.90.78.10">
    <property type="entry name" value="UDP-N-acetylenolpyruvoylglucosamine reductase, C-terminal domain"/>
    <property type="match status" value="1"/>
</dbReference>
<dbReference type="Gene3D" id="3.30.43.10">
    <property type="entry name" value="Uridine Diphospho-n-acetylenolpyruvylglucosamine Reductase, domain 2"/>
    <property type="match status" value="1"/>
</dbReference>
<dbReference type="HAMAP" id="MF_00037">
    <property type="entry name" value="MurB"/>
    <property type="match status" value="1"/>
</dbReference>
<dbReference type="InterPro" id="IPR016166">
    <property type="entry name" value="FAD-bd_PCMH"/>
</dbReference>
<dbReference type="InterPro" id="IPR036318">
    <property type="entry name" value="FAD-bd_PCMH-like_sf"/>
</dbReference>
<dbReference type="InterPro" id="IPR016167">
    <property type="entry name" value="FAD-bd_PCMH_sub1"/>
</dbReference>
<dbReference type="InterPro" id="IPR016169">
    <property type="entry name" value="FAD-bd_PCMH_sub2"/>
</dbReference>
<dbReference type="InterPro" id="IPR003170">
    <property type="entry name" value="MurB"/>
</dbReference>
<dbReference type="InterPro" id="IPR011601">
    <property type="entry name" value="MurB_C"/>
</dbReference>
<dbReference type="InterPro" id="IPR036635">
    <property type="entry name" value="MurB_C_sf"/>
</dbReference>
<dbReference type="InterPro" id="IPR006094">
    <property type="entry name" value="Oxid_FAD_bind_N"/>
</dbReference>
<dbReference type="NCBIfam" id="TIGR00179">
    <property type="entry name" value="murB"/>
    <property type="match status" value="1"/>
</dbReference>
<dbReference type="NCBIfam" id="NF000755">
    <property type="entry name" value="PRK00046.1"/>
    <property type="match status" value="1"/>
</dbReference>
<dbReference type="NCBIfam" id="NF010478">
    <property type="entry name" value="PRK13903.1"/>
    <property type="match status" value="1"/>
</dbReference>
<dbReference type="PANTHER" id="PTHR21071">
    <property type="entry name" value="UDP-N-ACETYLENOLPYRUVOYLGLUCOSAMINE REDUCTASE"/>
    <property type="match status" value="1"/>
</dbReference>
<dbReference type="PANTHER" id="PTHR21071:SF4">
    <property type="entry name" value="UDP-N-ACETYLENOLPYRUVOYLGLUCOSAMINE REDUCTASE"/>
    <property type="match status" value="1"/>
</dbReference>
<dbReference type="Pfam" id="PF01565">
    <property type="entry name" value="FAD_binding_4"/>
    <property type="match status" value="1"/>
</dbReference>
<dbReference type="Pfam" id="PF02873">
    <property type="entry name" value="MurB_C"/>
    <property type="match status" value="1"/>
</dbReference>
<dbReference type="SUPFAM" id="SSF56176">
    <property type="entry name" value="FAD-binding/transporter-associated domain-like"/>
    <property type="match status" value="1"/>
</dbReference>
<dbReference type="SUPFAM" id="SSF56194">
    <property type="entry name" value="Uridine diphospho-N-Acetylenolpyruvylglucosamine reductase, MurB, C-terminal domain"/>
    <property type="match status" value="1"/>
</dbReference>
<dbReference type="PROSITE" id="PS51387">
    <property type="entry name" value="FAD_PCMH"/>
    <property type="match status" value="1"/>
</dbReference>
<accession>Q4ZVY7</accession>
<reference key="1">
    <citation type="journal article" date="2005" name="Proc. Natl. Acad. Sci. U.S.A.">
        <title>Comparison of the complete genome sequences of Pseudomonas syringae pv. syringae B728a and pv. tomato DC3000.</title>
        <authorList>
            <person name="Feil H."/>
            <person name="Feil W.S."/>
            <person name="Chain P."/>
            <person name="Larimer F."/>
            <person name="Dibartolo G."/>
            <person name="Copeland A."/>
            <person name="Lykidis A."/>
            <person name="Trong S."/>
            <person name="Nolan M."/>
            <person name="Goltsman E."/>
            <person name="Thiel J."/>
            <person name="Malfatti S."/>
            <person name="Loper J.E."/>
            <person name="Lapidus A."/>
            <person name="Detter J.C."/>
            <person name="Land M."/>
            <person name="Richardson P.M."/>
            <person name="Kyrpides N.C."/>
            <person name="Ivanova N."/>
            <person name="Lindow S.E."/>
        </authorList>
    </citation>
    <scope>NUCLEOTIDE SEQUENCE [LARGE SCALE GENOMIC DNA]</scope>
    <source>
        <strain>B728a</strain>
    </source>
</reference>
<protein>
    <recommendedName>
        <fullName evidence="1">UDP-N-acetylenolpyruvoylglucosamine reductase</fullName>
        <ecNumber evidence="1">1.3.1.98</ecNumber>
    </recommendedName>
    <alternativeName>
        <fullName evidence="1">UDP-N-acetylmuramate dehydrogenase</fullName>
    </alternativeName>
</protein>